<sequence length="141" mass="15699">MEDQQRLEEIVNQLNIYQSQVELIQQQMEAVRATISELEILEKTLSDIQGKDGSETLVPVGAGSFIKAELKDTSEVIMSVGAGVAIKKNFEDAMESIKSQKNELESTLQKMGENLRKITDIMMKLSPQAEELLKKVRGSGE</sequence>
<evidence type="ECO:0000305" key="1"/>
<evidence type="ECO:0007829" key="2">
    <source>
        <dbReference type="PDB" id="1FXK"/>
    </source>
</evidence>
<organism>
    <name type="scientific">Methanothermobacter thermautotrophicus (strain ATCC 29096 / DSM 1053 / JCM 10044 / NBRC 100330 / Delta H)</name>
    <name type="common">Methanobacterium thermoautotrophicum</name>
    <dbReference type="NCBI Taxonomy" id="187420"/>
    <lineage>
        <taxon>Archaea</taxon>
        <taxon>Methanobacteriati</taxon>
        <taxon>Methanobacteriota</taxon>
        <taxon>Methanomada group</taxon>
        <taxon>Methanobacteria</taxon>
        <taxon>Methanobacteriales</taxon>
        <taxon>Methanobacteriaceae</taxon>
        <taxon>Methanothermobacter</taxon>
    </lineage>
</organism>
<accession>O27646</accession>
<protein>
    <recommendedName>
        <fullName>Prefoldin subunit alpha</fullName>
    </recommendedName>
    <alternativeName>
        <fullName>GimC subunit alpha</fullName>
    </alternativeName>
</protein>
<gene>
    <name type="primary">pfdA</name>
    <name type="ordered locus">MTH_1609</name>
</gene>
<proteinExistence type="evidence at protein level"/>
<dbReference type="EMBL" id="AE000666">
    <property type="protein sequence ID" value="AAB86082.1"/>
    <property type="molecule type" value="Genomic_DNA"/>
</dbReference>
<dbReference type="PIR" id="H69081">
    <property type="entry name" value="H69081"/>
</dbReference>
<dbReference type="RefSeq" id="WP_010877217.1">
    <property type="nucleotide sequence ID" value="NC_000916.1"/>
</dbReference>
<dbReference type="PDB" id="1FXK">
    <property type="method" value="X-ray"/>
    <property type="resolution" value="2.30 A"/>
    <property type="chains" value="C=7-133"/>
</dbReference>
<dbReference type="PDBsum" id="1FXK"/>
<dbReference type="SMR" id="O27646"/>
<dbReference type="FunCoup" id="O27646">
    <property type="interactions" value="2"/>
</dbReference>
<dbReference type="STRING" id="187420.MTH_1609"/>
<dbReference type="PaxDb" id="187420-MTH_1609"/>
<dbReference type="EnsemblBacteria" id="AAB86082">
    <property type="protein sequence ID" value="AAB86082"/>
    <property type="gene ID" value="MTH_1609"/>
</dbReference>
<dbReference type="GeneID" id="77404005"/>
<dbReference type="KEGG" id="mth:MTH_1609"/>
<dbReference type="PATRIC" id="fig|187420.15.peg.1573"/>
<dbReference type="HOGENOM" id="CLU_091867_1_1_2"/>
<dbReference type="InParanoid" id="O27646"/>
<dbReference type="EvolutionaryTrace" id="O27646"/>
<dbReference type="Proteomes" id="UP000005223">
    <property type="component" value="Chromosome"/>
</dbReference>
<dbReference type="GO" id="GO:0005737">
    <property type="term" value="C:cytoplasm"/>
    <property type="evidence" value="ECO:0007669"/>
    <property type="project" value="UniProtKB-SubCell"/>
</dbReference>
<dbReference type="GO" id="GO:0016272">
    <property type="term" value="C:prefoldin complex"/>
    <property type="evidence" value="ECO:0007669"/>
    <property type="project" value="UniProtKB-UniRule"/>
</dbReference>
<dbReference type="GO" id="GO:0051082">
    <property type="term" value="F:unfolded protein binding"/>
    <property type="evidence" value="ECO:0007669"/>
    <property type="project" value="UniProtKB-UniRule"/>
</dbReference>
<dbReference type="GO" id="GO:0006457">
    <property type="term" value="P:protein folding"/>
    <property type="evidence" value="ECO:0007669"/>
    <property type="project" value="UniProtKB-UniRule"/>
</dbReference>
<dbReference type="CDD" id="cd23160">
    <property type="entry name" value="Prefoldin_alpha_GimC"/>
    <property type="match status" value="1"/>
</dbReference>
<dbReference type="Gene3D" id="1.10.287.370">
    <property type="match status" value="1"/>
</dbReference>
<dbReference type="HAMAP" id="MF_00308">
    <property type="entry name" value="PfdA"/>
    <property type="match status" value="1"/>
</dbReference>
<dbReference type="InterPro" id="IPR011599">
    <property type="entry name" value="PFD_alpha_archaea"/>
</dbReference>
<dbReference type="InterPro" id="IPR009053">
    <property type="entry name" value="Prefoldin"/>
</dbReference>
<dbReference type="InterPro" id="IPR004127">
    <property type="entry name" value="Prefoldin_subunit_alpha"/>
</dbReference>
<dbReference type="NCBIfam" id="TIGR00293">
    <property type="entry name" value="prefoldin subunit alpha"/>
    <property type="match status" value="1"/>
</dbReference>
<dbReference type="PANTHER" id="PTHR12674">
    <property type="entry name" value="PREFOLDIN SUBUNIT 5"/>
    <property type="match status" value="1"/>
</dbReference>
<dbReference type="PANTHER" id="PTHR12674:SF2">
    <property type="entry name" value="PREFOLDIN SUBUNIT 5"/>
    <property type="match status" value="1"/>
</dbReference>
<dbReference type="Pfam" id="PF02996">
    <property type="entry name" value="Prefoldin"/>
    <property type="match status" value="1"/>
</dbReference>
<dbReference type="SUPFAM" id="SSF46579">
    <property type="entry name" value="Prefoldin"/>
    <property type="match status" value="1"/>
</dbReference>
<name>PFDA_METTH</name>
<reference key="1">
    <citation type="journal article" date="1997" name="J. Bacteriol.">
        <title>Complete genome sequence of Methanobacterium thermoautotrophicum deltaH: functional analysis and comparative genomics.</title>
        <authorList>
            <person name="Smith D.R."/>
            <person name="Doucette-Stamm L.A."/>
            <person name="Deloughery C."/>
            <person name="Lee H.-M."/>
            <person name="Dubois J."/>
            <person name="Aldredge T."/>
            <person name="Bashirzadeh R."/>
            <person name="Blakely D."/>
            <person name="Cook R."/>
            <person name="Gilbert K."/>
            <person name="Harrison D."/>
            <person name="Hoang L."/>
            <person name="Keagle P."/>
            <person name="Lumm W."/>
            <person name="Pothier B."/>
            <person name="Qiu D."/>
            <person name="Spadafora R."/>
            <person name="Vicare R."/>
            <person name="Wang Y."/>
            <person name="Wierzbowski J."/>
            <person name="Gibson R."/>
            <person name="Jiwani N."/>
            <person name="Caruso A."/>
            <person name="Bush D."/>
            <person name="Safer H."/>
            <person name="Patwell D."/>
            <person name="Prabhakar S."/>
            <person name="McDougall S."/>
            <person name="Shimer G."/>
            <person name="Goyal A."/>
            <person name="Pietrovski S."/>
            <person name="Church G.M."/>
            <person name="Daniels C.J."/>
            <person name="Mao J.-I."/>
            <person name="Rice P."/>
            <person name="Noelling J."/>
            <person name="Reeve J.N."/>
        </authorList>
    </citation>
    <scope>NUCLEOTIDE SEQUENCE [LARGE SCALE GENOMIC DNA]</scope>
    <source>
        <strain>ATCC 29096 / DSM 1053 / JCM 10044 / NBRC 100330 / Delta H</strain>
    </source>
</reference>
<reference key="2">
    <citation type="journal article" date="1999" name="EMBO J.">
        <title>MtGimC, a novel archaeal chaperone related to the eukaryotic chaperonin cofactor GimC/prefoldin.</title>
        <authorList>
            <person name="Leroux M.R."/>
            <person name="Fandrich M."/>
            <person name="Klunker D."/>
            <person name="Siegers K."/>
            <person name="Lupas A.N."/>
            <person name="Brown J.R."/>
            <person name="Schiebel E."/>
            <person name="Dobson C.M."/>
            <person name="Hartl F.U."/>
        </authorList>
    </citation>
    <scope>CHARACTERIZATION</scope>
    <source>
        <strain>ATCC 29096 / DSM 1053 / JCM 10044 / NBRC 100330 / Delta H</strain>
    </source>
</reference>
<reference key="3">
    <citation type="journal article" date="2000" name="Cell">
        <title>Structure of the molecular chaperone prefoldin. Unique interaction of multiple coiled coil tentacles with unfolded proteins.</title>
        <authorList>
            <person name="Siegert R."/>
            <person name="Leroux M.R."/>
            <person name="Scheufler C."/>
            <person name="Hartl F.U."/>
            <person name="Moarefi I."/>
        </authorList>
    </citation>
    <scope>X-RAY CRYSTALLOGRAPHY (2.3 ANGSTROMS)</scope>
</reference>
<keyword id="KW-0002">3D-structure</keyword>
<keyword id="KW-0143">Chaperone</keyword>
<keyword id="KW-0963">Cytoplasm</keyword>
<keyword id="KW-1185">Reference proteome</keyword>
<feature type="chain" id="PRO_0000153679" description="Prefoldin subunit alpha">
    <location>
        <begin position="1"/>
        <end position="141"/>
    </location>
</feature>
<feature type="helix" evidence="2">
    <location>
        <begin position="7"/>
        <end position="48"/>
    </location>
</feature>
<feature type="strand" evidence="2">
    <location>
        <begin position="55"/>
        <end position="61"/>
    </location>
</feature>
<feature type="strand" evidence="2">
    <location>
        <begin position="64"/>
        <end position="69"/>
    </location>
</feature>
<feature type="strand" evidence="2">
    <location>
        <begin position="75"/>
        <end position="81"/>
    </location>
</feature>
<feature type="strand" evidence="2">
    <location>
        <begin position="84"/>
        <end position="89"/>
    </location>
</feature>
<feature type="helix" evidence="2">
    <location>
        <begin position="90"/>
        <end position="136"/>
    </location>
</feature>
<comment type="function">
    <text>Molecular chaperone capable of stabilizing a range of proteins. Seems to fulfill an ATP-independent, HSP70-like function in archaeal de novo protein folding.</text>
</comment>
<comment type="subunit">
    <text>Heterohexamer of two alpha and four beta subunits.</text>
</comment>
<comment type="subcellular location">
    <subcellularLocation>
        <location>Cytoplasm</location>
    </subcellularLocation>
</comment>
<comment type="similarity">
    <text evidence="1">Belongs to the prefoldin subunit alpha family.</text>
</comment>